<protein>
    <recommendedName>
        <fullName evidence="1">Transcription elongation factor GreA</fullName>
    </recommendedName>
    <alternativeName>
        <fullName evidence="1">Transcript cleavage factor GreA</fullName>
    </alternativeName>
</protein>
<reference key="1">
    <citation type="submission" date="2008-10" db="EMBL/GenBank/DDBJ databases">
        <title>Genome sequence of Bacillus anthracis str. CDC 684.</title>
        <authorList>
            <person name="Dodson R.J."/>
            <person name="Munk A.C."/>
            <person name="Brettin T."/>
            <person name="Bruce D."/>
            <person name="Detter C."/>
            <person name="Tapia R."/>
            <person name="Han C."/>
            <person name="Sutton G."/>
            <person name="Sims D."/>
        </authorList>
    </citation>
    <scope>NUCLEOTIDE SEQUENCE [LARGE SCALE GENOMIC DNA]</scope>
    <source>
        <strain>CDC 684 / NRRL 3495</strain>
    </source>
</reference>
<name>GREA_BACAC</name>
<proteinExistence type="inferred from homology"/>
<accession>C3L5Y5</accession>
<keyword id="KW-0175">Coiled coil</keyword>
<keyword id="KW-0238">DNA-binding</keyword>
<keyword id="KW-0804">Transcription</keyword>
<keyword id="KW-0805">Transcription regulation</keyword>
<organism>
    <name type="scientific">Bacillus anthracis (strain CDC 684 / NRRL 3495)</name>
    <dbReference type="NCBI Taxonomy" id="568206"/>
    <lineage>
        <taxon>Bacteria</taxon>
        <taxon>Bacillati</taxon>
        <taxon>Bacillota</taxon>
        <taxon>Bacilli</taxon>
        <taxon>Bacillales</taxon>
        <taxon>Bacillaceae</taxon>
        <taxon>Bacillus</taxon>
        <taxon>Bacillus cereus group</taxon>
    </lineage>
</organism>
<sequence length="158" mass="17438">MATEKTYPMTQEGKQKLENELEDLKTVKRKEVVERIKIARSFGDLSENSEYDAAKDEQAFVEGRITQLENMIRNAVIITDNGEESTVVTLGKTVTFKELPNGDEEAYTIVGSAEADPFEGRISNDSPIAKSLLGKQIGEKVAIQTPGGEMQVEIISVK</sequence>
<feature type="chain" id="PRO_1000118947" description="Transcription elongation factor GreA">
    <location>
        <begin position="1"/>
        <end position="158"/>
    </location>
</feature>
<feature type="coiled-coil region" evidence="1">
    <location>
        <begin position="4"/>
        <end position="75"/>
    </location>
</feature>
<evidence type="ECO:0000255" key="1">
    <source>
        <dbReference type="HAMAP-Rule" id="MF_00105"/>
    </source>
</evidence>
<comment type="function">
    <text evidence="1">Necessary for efficient RNA polymerase transcription elongation past template-encoded arresting sites. The arresting sites in DNA have the property of trapping a certain fraction of elongating RNA polymerases that pass through, resulting in locked ternary complexes. Cleavage of the nascent transcript by cleavage factors such as GreA or GreB allows the resumption of elongation from the new 3'terminus. GreA releases sequences of 2 to 3 nucleotides.</text>
</comment>
<comment type="similarity">
    <text evidence="1">Belongs to the GreA/GreB family.</text>
</comment>
<dbReference type="EMBL" id="CP001215">
    <property type="protein sequence ID" value="ACP13611.1"/>
    <property type="molecule type" value="Genomic_DNA"/>
</dbReference>
<dbReference type="RefSeq" id="WP_000179966.1">
    <property type="nucleotide sequence ID" value="NC_012581.1"/>
</dbReference>
<dbReference type="SMR" id="C3L5Y5"/>
<dbReference type="GeneID" id="93006722"/>
<dbReference type="KEGG" id="bah:BAMEG_4644"/>
<dbReference type="HOGENOM" id="CLU_101379_2_1_9"/>
<dbReference type="GO" id="GO:0003677">
    <property type="term" value="F:DNA binding"/>
    <property type="evidence" value="ECO:0007669"/>
    <property type="project" value="UniProtKB-UniRule"/>
</dbReference>
<dbReference type="GO" id="GO:0070063">
    <property type="term" value="F:RNA polymerase binding"/>
    <property type="evidence" value="ECO:0007669"/>
    <property type="project" value="InterPro"/>
</dbReference>
<dbReference type="GO" id="GO:0006354">
    <property type="term" value="P:DNA-templated transcription elongation"/>
    <property type="evidence" value="ECO:0007669"/>
    <property type="project" value="TreeGrafter"/>
</dbReference>
<dbReference type="GO" id="GO:0032784">
    <property type="term" value="P:regulation of DNA-templated transcription elongation"/>
    <property type="evidence" value="ECO:0007669"/>
    <property type="project" value="UniProtKB-UniRule"/>
</dbReference>
<dbReference type="FunFam" id="1.10.287.180:FF:000001">
    <property type="entry name" value="Transcription elongation factor GreA"/>
    <property type="match status" value="1"/>
</dbReference>
<dbReference type="FunFam" id="3.10.50.30:FF:000001">
    <property type="entry name" value="Transcription elongation factor GreA"/>
    <property type="match status" value="1"/>
</dbReference>
<dbReference type="Gene3D" id="3.10.50.30">
    <property type="entry name" value="Transcription elongation factor, GreA/GreB, C-terminal domain"/>
    <property type="match status" value="1"/>
</dbReference>
<dbReference type="Gene3D" id="1.10.287.180">
    <property type="entry name" value="Transcription elongation factor, GreA/GreB, N-terminal domain"/>
    <property type="match status" value="1"/>
</dbReference>
<dbReference type="HAMAP" id="MF_00105">
    <property type="entry name" value="GreA_GreB"/>
    <property type="match status" value="1"/>
</dbReference>
<dbReference type="InterPro" id="IPR036953">
    <property type="entry name" value="GreA/GreB_C_sf"/>
</dbReference>
<dbReference type="InterPro" id="IPR018151">
    <property type="entry name" value="TF_GreA/GreB_CS"/>
</dbReference>
<dbReference type="InterPro" id="IPR006359">
    <property type="entry name" value="Tscrpt_elong_fac_GreA"/>
</dbReference>
<dbReference type="InterPro" id="IPR028624">
    <property type="entry name" value="Tscrpt_elong_fac_GreA/B"/>
</dbReference>
<dbReference type="InterPro" id="IPR001437">
    <property type="entry name" value="Tscrpt_elong_fac_GreA/B_C"/>
</dbReference>
<dbReference type="InterPro" id="IPR023459">
    <property type="entry name" value="Tscrpt_elong_fac_GreA/B_fam"/>
</dbReference>
<dbReference type="InterPro" id="IPR022691">
    <property type="entry name" value="Tscrpt_elong_fac_GreA/B_N"/>
</dbReference>
<dbReference type="InterPro" id="IPR036805">
    <property type="entry name" value="Tscrpt_elong_fac_GreA/B_N_sf"/>
</dbReference>
<dbReference type="NCBIfam" id="TIGR01462">
    <property type="entry name" value="greA"/>
    <property type="match status" value="1"/>
</dbReference>
<dbReference type="NCBIfam" id="NF001261">
    <property type="entry name" value="PRK00226.1-2"/>
    <property type="match status" value="1"/>
</dbReference>
<dbReference type="NCBIfam" id="NF001263">
    <property type="entry name" value="PRK00226.1-4"/>
    <property type="match status" value="1"/>
</dbReference>
<dbReference type="PANTHER" id="PTHR30437">
    <property type="entry name" value="TRANSCRIPTION ELONGATION FACTOR GREA"/>
    <property type="match status" value="1"/>
</dbReference>
<dbReference type="PANTHER" id="PTHR30437:SF4">
    <property type="entry name" value="TRANSCRIPTION ELONGATION FACTOR GREA"/>
    <property type="match status" value="1"/>
</dbReference>
<dbReference type="Pfam" id="PF01272">
    <property type="entry name" value="GreA_GreB"/>
    <property type="match status" value="1"/>
</dbReference>
<dbReference type="Pfam" id="PF03449">
    <property type="entry name" value="GreA_GreB_N"/>
    <property type="match status" value="1"/>
</dbReference>
<dbReference type="PIRSF" id="PIRSF006092">
    <property type="entry name" value="GreA_GreB"/>
    <property type="match status" value="1"/>
</dbReference>
<dbReference type="SUPFAM" id="SSF54534">
    <property type="entry name" value="FKBP-like"/>
    <property type="match status" value="1"/>
</dbReference>
<dbReference type="SUPFAM" id="SSF46557">
    <property type="entry name" value="GreA transcript cleavage protein, N-terminal domain"/>
    <property type="match status" value="1"/>
</dbReference>
<dbReference type="PROSITE" id="PS00829">
    <property type="entry name" value="GREAB_1"/>
    <property type="match status" value="1"/>
</dbReference>
<dbReference type="PROSITE" id="PS00830">
    <property type="entry name" value="GREAB_2"/>
    <property type="match status" value="1"/>
</dbReference>
<gene>
    <name evidence="1" type="primary">greA</name>
    <name type="ordered locus">BAMEG_4644</name>
</gene>